<organism>
    <name type="scientific">Bacillus cereus (strain 03BB102)</name>
    <dbReference type="NCBI Taxonomy" id="572264"/>
    <lineage>
        <taxon>Bacteria</taxon>
        <taxon>Bacillati</taxon>
        <taxon>Bacillota</taxon>
        <taxon>Bacilli</taxon>
        <taxon>Bacillales</taxon>
        <taxon>Bacillaceae</taxon>
        <taxon>Bacillus</taxon>
        <taxon>Bacillus cereus group</taxon>
    </lineage>
</organism>
<proteinExistence type="inferred from homology"/>
<comment type="catalytic activity">
    <reaction evidence="1">
        <text>2-formamido-N(1)-(5-O-phospho-beta-D-ribosyl)acetamidine + ATP = 5-amino-1-(5-phospho-beta-D-ribosyl)imidazole + ADP + phosphate + H(+)</text>
        <dbReference type="Rhea" id="RHEA:23032"/>
        <dbReference type="ChEBI" id="CHEBI:15378"/>
        <dbReference type="ChEBI" id="CHEBI:30616"/>
        <dbReference type="ChEBI" id="CHEBI:43474"/>
        <dbReference type="ChEBI" id="CHEBI:137981"/>
        <dbReference type="ChEBI" id="CHEBI:147287"/>
        <dbReference type="ChEBI" id="CHEBI:456216"/>
        <dbReference type="EC" id="6.3.3.1"/>
    </reaction>
</comment>
<comment type="pathway">
    <text evidence="1">Purine metabolism; IMP biosynthesis via de novo pathway; 5-amino-1-(5-phospho-D-ribosyl)imidazole from N(2)-formyl-N(1)-(5-phospho-D-ribosyl)glycinamide: step 2/2.</text>
</comment>
<comment type="subcellular location">
    <subcellularLocation>
        <location evidence="1">Cytoplasm</location>
    </subcellularLocation>
</comment>
<comment type="similarity">
    <text evidence="1">Belongs to the AIR synthase family.</text>
</comment>
<dbReference type="EC" id="6.3.3.1" evidence="1"/>
<dbReference type="EMBL" id="CP001407">
    <property type="protein sequence ID" value="ACO26496.1"/>
    <property type="molecule type" value="Genomic_DNA"/>
</dbReference>
<dbReference type="RefSeq" id="WP_001262436.1">
    <property type="nucleotide sequence ID" value="NZ_CP009318.1"/>
</dbReference>
<dbReference type="SMR" id="C1EV65"/>
<dbReference type="GeneID" id="45020355"/>
<dbReference type="KEGG" id="bcx:BCA_0370"/>
<dbReference type="PATRIC" id="fig|572264.18.peg.359"/>
<dbReference type="UniPathway" id="UPA00074">
    <property type="reaction ID" value="UER00129"/>
</dbReference>
<dbReference type="Proteomes" id="UP000002210">
    <property type="component" value="Chromosome"/>
</dbReference>
<dbReference type="GO" id="GO:0005829">
    <property type="term" value="C:cytosol"/>
    <property type="evidence" value="ECO:0007669"/>
    <property type="project" value="TreeGrafter"/>
</dbReference>
<dbReference type="GO" id="GO:0005524">
    <property type="term" value="F:ATP binding"/>
    <property type="evidence" value="ECO:0007669"/>
    <property type="project" value="UniProtKB-KW"/>
</dbReference>
<dbReference type="GO" id="GO:0004637">
    <property type="term" value="F:phosphoribosylamine-glycine ligase activity"/>
    <property type="evidence" value="ECO:0007669"/>
    <property type="project" value="TreeGrafter"/>
</dbReference>
<dbReference type="GO" id="GO:0004641">
    <property type="term" value="F:phosphoribosylformylglycinamidine cyclo-ligase activity"/>
    <property type="evidence" value="ECO:0007669"/>
    <property type="project" value="UniProtKB-UniRule"/>
</dbReference>
<dbReference type="GO" id="GO:0006189">
    <property type="term" value="P:'de novo' IMP biosynthetic process"/>
    <property type="evidence" value="ECO:0007669"/>
    <property type="project" value="UniProtKB-UniRule"/>
</dbReference>
<dbReference type="GO" id="GO:0046084">
    <property type="term" value="P:adenine biosynthetic process"/>
    <property type="evidence" value="ECO:0007669"/>
    <property type="project" value="TreeGrafter"/>
</dbReference>
<dbReference type="CDD" id="cd02196">
    <property type="entry name" value="PurM"/>
    <property type="match status" value="1"/>
</dbReference>
<dbReference type="FunFam" id="3.30.1330.10:FF:000001">
    <property type="entry name" value="Phosphoribosylformylglycinamidine cyclo-ligase"/>
    <property type="match status" value="1"/>
</dbReference>
<dbReference type="FunFam" id="3.90.650.10:FF:000001">
    <property type="entry name" value="Phosphoribosylformylglycinamidine cyclo-ligase"/>
    <property type="match status" value="1"/>
</dbReference>
<dbReference type="Gene3D" id="3.90.650.10">
    <property type="entry name" value="PurM-like C-terminal domain"/>
    <property type="match status" value="1"/>
</dbReference>
<dbReference type="Gene3D" id="3.30.1330.10">
    <property type="entry name" value="PurM-like, N-terminal domain"/>
    <property type="match status" value="1"/>
</dbReference>
<dbReference type="HAMAP" id="MF_00741">
    <property type="entry name" value="AIRS"/>
    <property type="match status" value="1"/>
</dbReference>
<dbReference type="InterPro" id="IPR010918">
    <property type="entry name" value="PurM-like_C_dom"/>
</dbReference>
<dbReference type="InterPro" id="IPR036676">
    <property type="entry name" value="PurM-like_C_sf"/>
</dbReference>
<dbReference type="InterPro" id="IPR016188">
    <property type="entry name" value="PurM-like_N"/>
</dbReference>
<dbReference type="InterPro" id="IPR036921">
    <property type="entry name" value="PurM-like_N_sf"/>
</dbReference>
<dbReference type="InterPro" id="IPR004733">
    <property type="entry name" value="PurM_cligase"/>
</dbReference>
<dbReference type="NCBIfam" id="TIGR00878">
    <property type="entry name" value="purM"/>
    <property type="match status" value="1"/>
</dbReference>
<dbReference type="PANTHER" id="PTHR10520:SF12">
    <property type="entry name" value="TRIFUNCTIONAL PURINE BIOSYNTHETIC PROTEIN ADENOSINE-3"/>
    <property type="match status" value="1"/>
</dbReference>
<dbReference type="PANTHER" id="PTHR10520">
    <property type="entry name" value="TRIFUNCTIONAL PURINE BIOSYNTHETIC PROTEIN ADENOSINE-3-RELATED"/>
    <property type="match status" value="1"/>
</dbReference>
<dbReference type="Pfam" id="PF00586">
    <property type="entry name" value="AIRS"/>
    <property type="match status" value="1"/>
</dbReference>
<dbReference type="Pfam" id="PF02769">
    <property type="entry name" value="AIRS_C"/>
    <property type="match status" value="1"/>
</dbReference>
<dbReference type="SUPFAM" id="SSF56042">
    <property type="entry name" value="PurM C-terminal domain-like"/>
    <property type="match status" value="1"/>
</dbReference>
<dbReference type="SUPFAM" id="SSF55326">
    <property type="entry name" value="PurM N-terminal domain-like"/>
    <property type="match status" value="1"/>
</dbReference>
<protein>
    <recommendedName>
        <fullName evidence="1">Phosphoribosylformylglycinamidine cyclo-ligase</fullName>
        <ecNumber evidence="1">6.3.3.1</ecNumber>
    </recommendedName>
    <alternativeName>
        <fullName evidence="1">AIR synthase</fullName>
    </alternativeName>
    <alternativeName>
        <fullName evidence="1">AIRS</fullName>
    </alternativeName>
    <alternativeName>
        <fullName evidence="1">Phosphoribosyl-aminoimidazole synthetase</fullName>
    </alternativeName>
</protein>
<name>PUR5_BACC3</name>
<sequence>MANAYKQAGVDIEAGYEAVSRMKKHVQTTMRKEVLGGLGGFGGMFDLSKFALEEPVLVSGTDGVGTKLMLAFMADKHDTIGIDAVAMCVNDIVVQGAEPLFFLDYIACGKAEPSKIENIVKGISEGCRQAGCALIGGETAEMPGMYSTEEYDLAGFTVGIVDKKKIVTGEKIEAGHVLIGLASSGIHSNGYSLVRKVLLEDGELSLDRIYGRLELPLGEELLKPTKIYVKPILELLKNHEVYGMAHITGGGFIENIPRMLPEGIGAEIELGSWKIQPIFSLLQEVGKLEEKEMFNIFNMGIGMVVAVKEEDAKDIVRLLEEQGETARIIGRTVQGAGVTFNGGKAL</sequence>
<reference key="1">
    <citation type="submission" date="2009-02" db="EMBL/GenBank/DDBJ databases">
        <title>Genome sequence of Bacillus cereus 03BB102.</title>
        <authorList>
            <person name="Dodson R.J."/>
            <person name="Jackson P."/>
            <person name="Munk A.C."/>
            <person name="Brettin T."/>
            <person name="Bruce D."/>
            <person name="Detter C."/>
            <person name="Tapia R."/>
            <person name="Han C."/>
            <person name="Sutton G."/>
            <person name="Sims D."/>
        </authorList>
    </citation>
    <scope>NUCLEOTIDE SEQUENCE [LARGE SCALE GENOMIC DNA]</scope>
    <source>
        <strain>03BB102</strain>
    </source>
</reference>
<accession>C1EV65</accession>
<evidence type="ECO:0000255" key="1">
    <source>
        <dbReference type="HAMAP-Rule" id="MF_00741"/>
    </source>
</evidence>
<gene>
    <name evidence="1" type="primary">purM</name>
    <name type="ordered locus">BCA_0370</name>
</gene>
<feature type="chain" id="PRO_1000148266" description="Phosphoribosylformylglycinamidine cyclo-ligase">
    <location>
        <begin position="1"/>
        <end position="346"/>
    </location>
</feature>
<keyword id="KW-0067">ATP-binding</keyword>
<keyword id="KW-0963">Cytoplasm</keyword>
<keyword id="KW-0436">Ligase</keyword>
<keyword id="KW-0547">Nucleotide-binding</keyword>
<keyword id="KW-0658">Purine biosynthesis</keyword>